<accession>Q4R1I9</accession>
<protein>
    <recommendedName>
        <fullName>Anthocyanidin 5,3-O-glucosyltransferase</fullName>
        <ecNumber>2.4.1.-</ecNumber>
    </recommendedName>
    <alternativeName>
        <fullName>UDP-glucose: anthocyanidin 5,3-O-glucosyltransferase</fullName>
    </alternativeName>
</protein>
<evidence type="ECO:0000269" key="1">
    <source>
    </source>
</evidence>
<evidence type="ECO:0000305" key="2"/>
<organism>
    <name type="scientific">Rosa hybrid cultivar</name>
    <dbReference type="NCBI Taxonomy" id="128735"/>
    <lineage>
        <taxon>Eukaryota</taxon>
        <taxon>Viridiplantae</taxon>
        <taxon>Streptophyta</taxon>
        <taxon>Embryophyta</taxon>
        <taxon>Tracheophyta</taxon>
        <taxon>Spermatophyta</taxon>
        <taxon>Magnoliopsida</taxon>
        <taxon>eudicotyledons</taxon>
        <taxon>Gunneridae</taxon>
        <taxon>Pentapetalae</taxon>
        <taxon>rosids</taxon>
        <taxon>fabids</taxon>
        <taxon>Rosales</taxon>
        <taxon>Rosaceae</taxon>
        <taxon>Rosoideae</taxon>
        <taxon>Rosoideae incertae sedis</taxon>
        <taxon>Rosa</taxon>
    </lineage>
</organism>
<feature type="chain" id="PRO_0000074172" description="Anthocyanidin 5,3-O-glucosyltransferase">
    <location>
        <begin position="1"/>
        <end position="473"/>
    </location>
</feature>
<proteinExistence type="evidence at transcript level"/>
<sequence length="473" mass="51877">MGGDAIVLYPYPGLGHLISMVELGKLLLTHHPSFSITILASTAPTTIAATAKLVASSNDQLTNYIKAVSADNPAINFHHLPTISSLPEHIEKLNLPFEYARLQIPNILQVLQTLKSSLKALILDMFCDALFDVTKDLNIPTFYFYTSAGRSLAVLLNIPTFHRTTNSLSDFGDVPISISGMPPIPVSAMPKLLFDRSTNFYKSFLSTSTHMAKSNGIILNTFDLLEERALKALRAGLCLPNQPTPPIFTVGPLISGKSGDNDEHESLKWLNNQPKDSVVFLCFGSMGVFSIKQLEAMALGLEKSGQRFLWVVRNPPIEELPVEEPSLEEILPKGFVERTKDRGLVVRKWAPQVEVLSHDSVGGFVTHCGWNSVLEAVCNGVPMVAWPLYAEQKLGRVFLVEEMKVAVGVKESETGFVSADELEKRVRELMDSESGDEIRGRVSEFSNGGVKAKEEGGSSVASLAKLAQLWKQK</sequence>
<gene>
    <name type="primary">RhGT1</name>
</gene>
<name>ANGLT_ROSHC</name>
<comment type="function">
    <text evidence="1">Sequentially catalyzes two glycosylation steps at the 5-OH and 3-OH positions of anthocyanidin. Unglycosylated anthocyanidin or anthocyanidin 5-O-glucoside, but not anthocyanidin 3-O-glucoside, can be used as glucosyl acceptor.</text>
</comment>
<comment type="pathway">
    <text>Pigment biosynthesis; anthocyanin biosynthesis.</text>
</comment>
<comment type="miscellaneous">
    <text>In roses, anthocyanidin 3,5-O-diglucoside is the first stable anthocyanin, and therefore responsible for flower coloration, whereas this is usually anthocyanidin 3-O-glucoside in other plants.</text>
</comment>
<comment type="similarity">
    <text evidence="2">Belongs to the UDP-glycosyltransferase family.</text>
</comment>
<comment type="online information" name="Protein Spotlight">
    <link uri="https://www.proteinspotlight.org/back_issues/063"/>
    <text>The color of the rose - Issue 63 of October 2005</text>
</comment>
<keyword id="KW-0328">Glycosyltransferase</keyword>
<keyword id="KW-0808">Transferase</keyword>
<reference key="1">
    <citation type="journal article" date="2005" name="Nature">
        <title>Plant biochemistry: anthocyanin biosynthesis in roses.</title>
        <authorList>
            <person name="Ogata J."/>
            <person name="Kanno Y."/>
            <person name="Itoh Y."/>
            <person name="Tsugawa H."/>
            <person name="Suzuki M."/>
        </authorList>
    </citation>
    <scope>NUCLEOTIDE SEQUENCE [MRNA]</scope>
    <scope>FUNCTION</scope>
    <source>
        <strain>cv. Crimson Glory</strain>
    </source>
</reference>
<dbReference type="EC" id="2.4.1.-"/>
<dbReference type="EMBL" id="AB201048">
    <property type="protein sequence ID" value="BAD99560.1"/>
    <property type="molecule type" value="mRNA"/>
</dbReference>
<dbReference type="SMR" id="Q4R1I9"/>
<dbReference type="CAZy" id="GT1">
    <property type="family name" value="Glycosyltransferase Family 1"/>
</dbReference>
<dbReference type="KEGG" id="ag:BAD99560"/>
<dbReference type="UniPathway" id="UPA00009"/>
<dbReference type="GO" id="GO:0035251">
    <property type="term" value="F:UDP-glucosyltransferase activity"/>
    <property type="evidence" value="ECO:0007669"/>
    <property type="project" value="InterPro"/>
</dbReference>
<dbReference type="GO" id="GO:0009718">
    <property type="term" value="P:anthocyanin-containing compound biosynthetic process"/>
    <property type="evidence" value="ECO:0007669"/>
    <property type="project" value="UniProtKB-UniPathway"/>
</dbReference>
<dbReference type="CDD" id="cd03784">
    <property type="entry name" value="GT1_Gtf-like"/>
    <property type="match status" value="1"/>
</dbReference>
<dbReference type="FunFam" id="3.40.50.2000:FF:000020">
    <property type="entry name" value="Glycosyltransferase"/>
    <property type="match status" value="1"/>
</dbReference>
<dbReference type="Gene3D" id="3.40.50.2000">
    <property type="entry name" value="Glycogen Phosphorylase B"/>
    <property type="match status" value="2"/>
</dbReference>
<dbReference type="InterPro" id="IPR050481">
    <property type="entry name" value="UDP-glycosyltransf_plant"/>
</dbReference>
<dbReference type="InterPro" id="IPR002213">
    <property type="entry name" value="UDP_glucos_trans"/>
</dbReference>
<dbReference type="InterPro" id="IPR035595">
    <property type="entry name" value="UDP_glycos_trans_CS"/>
</dbReference>
<dbReference type="PANTHER" id="PTHR48048">
    <property type="entry name" value="GLYCOSYLTRANSFERASE"/>
    <property type="match status" value="1"/>
</dbReference>
<dbReference type="PANTHER" id="PTHR48048:SF30">
    <property type="entry name" value="GLYCOSYLTRANSFERASE"/>
    <property type="match status" value="1"/>
</dbReference>
<dbReference type="Pfam" id="PF00201">
    <property type="entry name" value="UDPGT"/>
    <property type="match status" value="1"/>
</dbReference>
<dbReference type="SUPFAM" id="SSF53756">
    <property type="entry name" value="UDP-Glycosyltransferase/glycogen phosphorylase"/>
    <property type="match status" value="1"/>
</dbReference>
<dbReference type="PROSITE" id="PS00375">
    <property type="entry name" value="UDPGT"/>
    <property type="match status" value="1"/>
</dbReference>